<feature type="chain" id="PRO_0000063827" description="Lamin-C">
    <location>
        <begin position="1"/>
        <end position="621"/>
    </location>
</feature>
<feature type="domain" description="IF rod" evidence="4">
    <location>
        <begin position="46"/>
        <end position="402"/>
    </location>
</feature>
<feature type="domain" description="LTD" evidence="3">
    <location>
        <begin position="468"/>
        <end position="582"/>
    </location>
</feature>
<feature type="region of interest" description="Disordered" evidence="5">
    <location>
        <begin position="1"/>
        <end position="47"/>
    </location>
</feature>
<feature type="region of interest" description="Head">
    <location>
        <begin position="1"/>
        <end position="47"/>
    </location>
</feature>
<feature type="region of interest" description="Coil 1A">
    <location>
        <begin position="47"/>
        <end position="85"/>
    </location>
</feature>
<feature type="region of interest" description="Linker 1">
    <location>
        <begin position="86"/>
        <end position="95"/>
    </location>
</feature>
<feature type="region of interest" description="Coil 1B">
    <location>
        <begin position="96"/>
        <end position="233"/>
    </location>
</feature>
<feature type="region of interest" description="Linker 2">
    <location>
        <begin position="234"/>
        <end position="257"/>
    </location>
</feature>
<feature type="region of interest" description="Coil 2">
    <location>
        <begin position="258"/>
        <end position="403"/>
    </location>
</feature>
<feature type="region of interest" description="Tail">
    <location>
        <begin position="404"/>
        <end position="621"/>
    </location>
</feature>
<feature type="region of interest" description="Disordered" evidence="5">
    <location>
        <begin position="404"/>
        <end position="458"/>
    </location>
</feature>
<feature type="region of interest" description="Disordered" evidence="5">
    <location>
        <begin position="585"/>
        <end position="605"/>
    </location>
</feature>
<feature type="short sequence motif" description="Nuclear localization signal" evidence="2">
    <location>
        <begin position="453"/>
        <end position="458"/>
    </location>
</feature>
<feature type="compositionally biased region" description="Polar residues" evidence="5">
    <location>
        <begin position="7"/>
        <end position="31"/>
    </location>
</feature>
<feature type="compositionally biased region" description="Low complexity" evidence="5">
    <location>
        <begin position="33"/>
        <end position="42"/>
    </location>
</feature>
<feature type="compositionally biased region" description="Polar residues" evidence="5">
    <location>
        <begin position="409"/>
        <end position="450"/>
    </location>
</feature>
<feature type="site" description="Heptad change of phase">
    <location>
        <position position="281"/>
    </location>
</feature>
<feature type="site" description="Heptad change of phase">
    <location>
        <position position="345"/>
    </location>
</feature>
<feature type="modified residue" description="Phosphoserine" evidence="7">
    <location>
        <position position="34"/>
    </location>
</feature>
<feature type="modified residue" description="Phosphoserine" evidence="7">
    <location>
        <position position="406"/>
    </location>
</feature>
<feature type="modified residue" description="Phosphoserine" evidence="7">
    <location>
        <position position="441"/>
    </location>
</feature>
<feature type="modified residue" description="Phosphothreonine" evidence="7">
    <location>
        <position position="443"/>
    </location>
</feature>
<feature type="sequence conflict" description="In Ref. 2; CAA53480." evidence="11" ref="2">
    <original>S</original>
    <variation>A</variation>
    <location>
        <position position="166"/>
    </location>
</feature>
<feature type="sequence conflict" description="In Ref. 1; AAA28666." evidence="11" ref="1">
    <original>M</original>
    <variation>I</variation>
    <location>
        <position position="363"/>
    </location>
</feature>
<feature type="sequence conflict" description="In Ref. 2; CAA53480." evidence="11" ref="2">
    <original>RR</original>
    <variation>HH</variation>
    <location>
        <begin position="439"/>
        <end position="440"/>
    </location>
</feature>
<feature type="sequence conflict" description="In Ref. 1; AAA28666." evidence="11" ref="1">
    <original>V</original>
    <variation>I</variation>
    <location>
        <position position="528"/>
    </location>
</feature>
<dbReference type="EMBL" id="L07933">
    <property type="protein sequence ID" value="AAA28666.1"/>
    <property type="molecule type" value="mRNA"/>
</dbReference>
<dbReference type="EMBL" id="X75886">
    <property type="protein sequence ID" value="CAA53480.1"/>
    <property type="molecule type" value="Genomic_DNA"/>
</dbReference>
<dbReference type="EMBL" id="AE013599">
    <property type="protein sequence ID" value="AAF58237.1"/>
    <property type="molecule type" value="Genomic_DNA"/>
</dbReference>
<dbReference type="EMBL" id="AY095046">
    <property type="protein sequence ID" value="AAM11374.1"/>
    <property type="molecule type" value="mRNA"/>
</dbReference>
<dbReference type="PIR" id="S49020">
    <property type="entry name" value="S49020"/>
</dbReference>
<dbReference type="RefSeq" id="NP_523742.2">
    <property type="nucleotide sequence ID" value="NM_079018.3"/>
</dbReference>
<dbReference type="SMR" id="Q03427"/>
<dbReference type="BioGRID" id="62363">
    <property type="interactions" value="14"/>
</dbReference>
<dbReference type="FunCoup" id="Q03427">
    <property type="interactions" value="745"/>
</dbReference>
<dbReference type="STRING" id="7227.FBpp0305369"/>
<dbReference type="GlyGen" id="Q03427">
    <property type="glycosylation" value="3 sites"/>
</dbReference>
<dbReference type="iPTMnet" id="Q03427"/>
<dbReference type="PaxDb" id="7227-FBpp0305369"/>
<dbReference type="DNASU" id="36615"/>
<dbReference type="EnsemblMetazoa" id="FBtr0087512">
    <property type="protein sequence ID" value="FBpp0086641"/>
    <property type="gene ID" value="FBgn0010397"/>
</dbReference>
<dbReference type="GeneID" id="36615"/>
<dbReference type="KEGG" id="dme:Dmel_CG10119"/>
<dbReference type="AGR" id="FB:FBgn0010397"/>
<dbReference type="CTD" id="36615"/>
<dbReference type="FlyBase" id="FBgn0010397">
    <property type="gene designation" value="LamC"/>
</dbReference>
<dbReference type="VEuPathDB" id="VectorBase:FBgn0010397"/>
<dbReference type="eggNOG" id="KOG0977">
    <property type="taxonomic scope" value="Eukaryota"/>
</dbReference>
<dbReference type="GeneTree" id="ENSGT00940000168319"/>
<dbReference type="HOGENOM" id="CLU_012560_9_2_1"/>
<dbReference type="InParanoid" id="Q03427"/>
<dbReference type="OrthoDB" id="102442at2759"/>
<dbReference type="PhylomeDB" id="Q03427"/>
<dbReference type="Reactome" id="R-DME-4419969">
    <property type="pathway name" value="Depolymerization of the Nuclear Lamina"/>
</dbReference>
<dbReference type="Reactome" id="R-DME-9013405">
    <property type="pathway name" value="RHOD GTPase cycle"/>
</dbReference>
<dbReference type="Reactome" id="R-DME-9035034">
    <property type="pathway name" value="RHOF GTPase cycle"/>
</dbReference>
<dbReference type="BioGRID-ORCS" id="36615">
    <property type="hits" value="0 hits in 3 CRISPR screens"/>
</dbReference>
<dbReference type="GenomeRNAi" id="36615"/>
<dbReference type="PRO" id="PR:Q03427"/>
<dbReference type="Proteomes" id="UP000000803">
    <property type="component" value="Chromosome 2R"/>
</dbReference>
<dbReference type="Bgee" id="FBgn0010397">
    <property type="expression patterns" value="Expressed in adult enteroendocrine precursor cell in adult midgut (Drosophila) and 179 other cell types or tissues"/>
</dbReference>
<dbReference type="ExpressionAtlas" id="Q03427">
    <property type="expression patterns" value="baseline and differential"/>
</dbReference>
<dbReference type="GO" id="GO:0005638">
    <property type="term" value="C:lamin filament"/>
    <property type="evidence" value="ECO:0000314"/>
    <property type="project" value="FlyBase"/>
</dbReference>
<dbReference type="GO" id="GO:0005635">
    <property type="term" value="C:nuclear envelope"/>
    <property type="evidence" value="ECO:0000314"/>
    <property type="project" value="FlyBase"/>
</dbReference>
<dbReference type="GO" id="GO:0005652">
    <property type="term" value="C:nuclear lamina"/>
    <property type="evidence" value="ECO:0000314"/>
    <property type="project" value="UniProtKB"/>
</dbReference>
<dbReference type="GO" id="GO:0034399">
    <property type="term" value="C:nuclear periphery"/>
    <property type="evidence" value="ECO:0000314"/>
    <property type="project" value="FlyBase"/>
</dbReference>
<dbReference type="GO" id="GO:0070732">
    <property type="term" value="C:spindle envelope"/>
    <property type="evidence" value="ECO:0000314"/>
    <property type="project" value="FlyBase"/>
</dbReference>
<dbReference type="GO" id="GO:0005200">
    <property type="term" value="F:structural constituent of cytoskeleton"/>
    <property type="evidence" value="ECO:0000315"/>
    <property type="project" value="FlyBase"/>
</dbReference>
<dbReference type="GO" id="GO:0006325">
    <property type="term" value="P:chromatin organization"/>
    <property type="evidence" value="ECO:0000315"/>
    <property type="project" value="FlyBase"/>
</dbReference>
<dbReference type="GO" id="GO:0031507">
    <property type="term" value="P:heterochromatin formation"/>
    <property type="evidence" value="ECO:0000314"/>
    <property type="project" value="FlyBase"/>
</dbReference>
<dbReference type="GO" id="GO:0007112">
    <property type="term" value="P:male meiosis cytokinesis"/>
    <property type="evidence" value="ECO:0000315"/>
    <property type="project" value="UniProtKB"/>
</dbReference>
<dbReference type="GO" id="GO:0060415">
    <property type="term" value="P:muscle tissue morphogenesis"/>
    <property type="evidence" value="ECO:0000315"/>
    <property type="project" value="FlyBase"/>
</dbReference>
<dbReference type="GO" id="GO:0006998">
    <property type="term" value="P:nuclear envelope organization"/>
    <property type="evidence" value="ECO:0000318"/>
    <property type="project" value="GO_Central"/>
</dbReference>
<dbReference type="GO" id="GO:0007097">
    <property type="term" value="P:nuclear migration"/>
    <property type="evidence" value="ECO:0000318"/>
    <property type="project" value="GO_Central"/>
</dbReference>
<dbReference type="GO" id="GO:0051664">
    <property type="term" value="P:nuclear pore localization"/>
    <property type="evidence" value="ECO:0000315"/>
    <property type="project" value="FlyBase"/>
</dbReference>
<dbReference type="GO" id="GO:0090435">
    <property type="term" value="P:protein localization to nuclear envelope"/>
    <property type="evidence" value="ECO:0000318"/>
    <property type="project" value="GO_Central"/>
</dbReference>
<dbReference type="GO" id="GO:0030833">
    <property type="term" value="P:regulation of actin filament polymerization"/>
    <property type="evidence" value="ECO:0000315"/>
    <property type="project" value="FlyBase"/>
</dbReference>
<dbReference type="FunFam" id="1.20.5.170:FF:000058">
    <property type="entry name" value="Intermediate filament protein B"/>
    <property type="match status" value="1"/>
</dbReference>
<dbReference type="FunFam" id="2.60.40.1260:FF:000004">
    <property type="entry name" value="LamC, isoform B"/>
    <property type="match status" value="1"/>
</dbReference>
<dbReference type="FunFam" id="1.20.5.500:FF:000008">
    <property type="entry name" value="Lamin, isoform B"/>
    <property type="match status" value="1"/>
</dbReference>
<dbReference type="Gene3D" id="1.20.5.170">
    <property type="match status" value="1"/>
</dbReference>
<dbReference type="Gene3D" id="2.60.40.1260">
    <property type="entry name" value="Lamin Tail domain"/>
    <property type="match status" value="1"/>
</dbReference>
<dbReference type="Gene3D" id="1.20.5.500">
    <property type="entry name" value="Single helix bin"/>
    <property type="match status" value="1"/>
</dbReference>
<dbReference type="Gene3D" id="1.20.5.1160">
    <property type="entry name" value="Vasodilator-stimulated phosphoprotein"/>
    <property type="match status" value="1"/>
</dbReference>
<dbReference type="InterPro" id="IPR039008">
    <property type="entry name" value="IF_rod_dom"/>
</dbReference>
<dbReference type="InterPro" id="IPR001322">
    <property type="entry name" value="Lamin_tail_dom"/>
</dbReference>
<dbReference type="InterPro" id="IPR036415">
    <property type="entry name" value="Lamin_tail_dom_sf"/>
</dbReference>
<dbReference type="PANTHER" id="PTHR45721">
    <property type="entry name" value="LAMIN DM0-RELATED"/>
    <property type="match status" value="1"/>
</dbReference>
<dbReference type="PANTHER" id="PTHR45721:SF11">
    <property type="entry name" value="LAMIN DM0-RELATED"/>
    <property type="match status" value="1"/>
</dbReference>
<dbReference type="Pfam" id="PF00038">
    <property type="entry name" value="Filament"/>
    <property type="match status" value="1"/>
</dbReference>
<dbReference type="Pfam" id="PF00932">
    <property type="entry name" value="LTD"/>
    <property type="match status" value="1"/>
</dbReference>
<dbReference type="SMART" id="SM01391">
    <property type="entry name" value="Filament"/>
    <property type="match status" value="1"/>
</dbReference>
<dbReference type="SUPFAM" id="SSF64593">
    <property type="entry name" value="Intermediate filament protein, coiled coil region"/>
    <property type="match status" value="2"/>
</dbReference>
<dbReference type="SUPFAM" id="SSF74853">
    <property type="entry name" value="Lamin A/C globular tail domain"/>
    <property type="match status" value="1"/>
</dbReference>
<dbReference type="PROSITE" id="PS51842">
    <property type="entry name" value="IF_ROD_2"/>
    <property type="match status" value="1"/>
</dbReference>
<dbReference type="PROSITE" id="PS51841">
    <property type="entry name" value="LTD"/>
    <property type="match status" value="1"/>
</dbReference>
<organism>
    <name type="scientific">Drosophila melanogaster</name>
    <name type="common">Fruit fly</name>
    <dbReference type="NCBI Taxonomy" id="7227"/>
    <lineage>
        <taxon>Eukaryota</taxon>
        <taxon>Metazoa</taxon>
        <taxon>Ecdysozoa</taxon>
        <taxon>Arthropoda</taxon>
        <taxon>Hexapoda</taxon>
        <taxon>Insecta</taxon>
        <taxon>Pterygota</taxon>
        <taxon>Neoptera</taxon>
        <taxon>Endopterygota</taxon>
        <taxon>Diptera</taxon>
        <taxon>Brachycera</taxon>
        <taxon>Muscomorpha</taxon>
        <taxon>Ephydroidea</taxon>
        <taxon>Drosophilidae</taxon>
        <taxon>Drosophila</taxon>
        <taxon>Sophophora</taxon>
    </lineage>
</organism>
<keyword id="KW-0175">Coiled coil</keyword>
<keyword id="KW-0403">Intermediate filament</keyword>
<keyword id="KW-0539">Nucleus</keyword>
<keyword id="KW-0597">Phosphoprotein</keyword>
<keyword id="KW-1185">Reference proteome</keyword>
<comment type="function">
    <text evidence="1 9">Lamins are components of the nuclear lamina, a fibrous layer on the nucleoplasmic side of the inner nuclear membrane, which is thought to provide a framework for the nuclear envelope and may also interact with chromatin (By similarity). In spermatocytes, regulates cytokinesis during meiosis (PubMed:27402967).</text>
</comment>
<comment type="subunit">
    <text evidence="6">Interacts with MAN1.</text>
</comment>
<comment type="subcellular location">
    <subcellularLocation>
        <location evidence="10">Nucleus</location>
    </subcellularLocation>
    <subcellularLocation>
        <location evidence="8 9">Nucleus lamina</location>
    </subcellularLocation>
    <text evidence="9 10">Nuclear periphery (PubMed:7593280). In premeiotic nuclei of primary spermatocytes, localization to the nuclear lamina depends on type-B lamin Lam. In spermatocytes, temporarily depleted between anaphase I and telophase I, and anaphase II and telophase II.</text>
</comment>
<comment type="tissue specificity">
    <text evidence="9 10">First detected from late stage 12 in the oenocytes, abdominal segments, hindgut and posterior spiracles, with expression increasing in stage 13 (PubMed:7593280) (at protein level). In stage 14, also becomes detectable in the foregut (PubMed:7593280) (at protein level). Stage 15 shows expression in the epidermis, dorsal longitudinal trunk, pharynx, esophagus and proventriculus, with the dorsal pharyngeal musculature showing expression in late stage 15 (PubMed:7593280) (at protein level). In stage 16 embryos, also detected in the exit glia with increasing expression in the somatic musculature (PubMed:7593280) (at protein level). Also detected in the visceral mesoderm but not in the midgut or central nervous system until the end of embryogenesis (PubMed:7593280) (at protein level). In third instar larvae, detectable at varying levels in all cell types (PubMed:7593280) (at protein level). Expressed in spermatocytes (at protein level) (PubMed:27402967).</text>
</comment>
<comment type="developmental stage">
    <text evidence="10">Expressed in 12-22 hours embryos. Expression peaks in larvae and declines in pupae and adults.</text>
</comment>
<comment type="similarity">
    <text evidence="4">Belongs to the intermediate filament family.</text>
</comment>
<protein>
    <recommendedName>
        <fullName>Lamin-C</fullName>
    </recommendedName>
    <alternativeName>
        <fullName>pG-IF</fullName>
    </alternativeName>
</protein>
<gene>
    <name type="primary">LamC</name>
    <name type="ORF">CG10119</name>
</gene>
<sequence length="621" mass="69860">MSARRVTLNTRVSRASTSTPVGGASTSSRVGATSPTSPTRTSRQQEKEELQHLNDRLACYIDRMRNLENENSRLTQELNLAQDTVNRETSNLKAVYEKELAAARKLLDETAKEKAKLEIDIKRLWEENDDLKPRLDKKTKEATVAENNARLYENRYNEVNGKYNQSLADRKKFEDQAKELALENERLRRQLDDLRKQLEAETLARVDLENQNQSLREELAFKDQVHTQELTETRSRRQIEISEIDGRLSRQYEAKLQQSLQELRDQYEGQMRINREEIELLYDNEIQNLKAAANRAAQGSALATEEVRLMRTKIDGLNAKLQNLEDTNAGLNARIRELENLLDTERQRHNQYIASLEAELQRMRDEMAHQLQEYQGLMDIKVSLDLEIAAYDKLLCGEERRLNIESPGRPTTDSGISSNGSHLTASASSRSGRVTPSGRRSATPGISGSSAVKRRRTVIDESEDRTLSEYSVNAAAKGDLEIIEADVEGRFIKLHNKGTEEINLTGWQLTRIAGDEELAFKFSRGSKVLGGASVTIWSVDAGTAHDPPNNLVMKKKWPVANSMRSVLANADKEDVASYDRVRANVSSHTSRHRSSGTPSTGFTLGSGAGSTGVRSLFSLLF</sequence>
<reference key="1">
    <citation type="journal article" date="1993" name="J. Cell Sci.">
        <title>A cDNA from Drosophila melanogaster encodes a lamin C-like intermediate filament protein.</title>
        <authorList>
            <person name="Bossie C.A."/>
            <person name="Sanders M.M."/>
        </authorList>
    </citation>
    <scope>NUCLEOTIDE SEQUENCE [MRNA]</scope>
    <source>
        <tissue>Embryo</tissue>
    </source>
</reference>
<reference key="2">
    <citation type="journal article" date="1994" name="Eur. J. Cell Biol.">
        <title>The organization of the gene for Drosophila lamin C: limited homology with vertebrate lamin genes and lack of homology versus the Drosophila lamin Dmo gene.</title>
        <authorList>
            <person name="Riemer D."/>
            <person name="Weber K."/>
        </authorList>
    </citation>
    <scope>NUCLEOTIDE SEQUENCE [GENOMIC DNA]</scope>
    <source>
        <tissue>Embryo</tissue>
    </source>
</reference>
<reference key="3">
    <citation type="journal article" date="2000" name="Science">
        <title>The genome sequence of Drosophila melanogaster.</title>
        <authorList>
            <person name="Adams M.D."/>
            <person name="Celniker S.E."/>
            <person name="Holt R.A."/>
            <person name="Evans C.A."/>
            <person name="Gocayne J.D."/>
            <person name="Amanatides P.G."/>
            <person name="Scherer S.E."/>
            <person name="Li P.W."/>
            <person name="Hoskins R.A."/>
            <person name="Galle R.F."/>
            <person name="George R.A."/>
            <person name="Lewis S.E."/>
            <person name="Richards S."/>
            <person name="Ashburner M."/>
            <person name="Henderson S.N."/>
            <person name="Sutton G.G."/>
            <person name="Wortman J.R."/>
            <person name="Yandell M.D."/>
            <person name="Zhang Q."/>
            <person name="Chen L.X."/>
            <person name="Brandon R.C."/>
            <person name="Rogers Y.-H.C."/>
            <person name="Blazej R.G."/>
            <person name="Champe M."/>
            <person name="Pfeiffer B.D."/>
            <person name="Wan K.H."/>
            <person name="Doyle C."/>
            <person name="Baxter E.G."/>
            <person name="Helt G."/>
            <person name="Nelson C.R."/>
            <person name="Miklos G.L.G."/>
            <person name="Abril J.F."/>
            <person name="Agbayani A."/>
            <person name="An H.-J."/>
            <person name="Andrews-Pfannkoch C."/>
            <person name="Baldwin D."/>
            <person name="Ballew R.M."/>
            <person name="Basu A."/>
            <person name="Baxendale J."/>
            <person name="Bayraktaroglu L."/>
            <person name="Beasley E.M."/>
            <person name="Beeson K.Y."/>
            <person name="Benos P.V."/>
            <person name="Berman B.P."/>
            <person name="Bhandari D."/>
            <person name="Bolshakov S."/>
            <person name="Borkova D."/>
            <person name="Botchan M.R."/>
            <person name="Bouck J."/>
            <person name="Brokstein P."/>
            <person name="Brottier P."/>
            <person name="Burtis K.C."/>
            <person name="Busam D.A."/>
            <person name="Butler H."/>
            <person name="Cadieu E."/>
            <person name="Center A."/>
            <person name="Chandra I."/>
            <person name="Cherry J.M."/>
            <person name="Cawley S."/>
            <person name="Dahlke C."/>
            <person name="Davenport L.B."/>
            <person name="Davies P."/>
            <person name="de Pablos B."/>
            <person name="Delcher A."/>
            <person name="Deng Z."/>
            <person name="Mays A.D."/>
            <person name="Dew I."/>
            <person name="Dietz S.M."/>
            <person name="Dodson K."/>
            <person name="Doup L.E."/>
            <person name="Downes M."/>
            <person name="Dugan-Rocha S."/>
            <person name="Dunkov B.C."/>
            <person name="Dunn P."/>
            <person name="Durbin K.J."/>
            <person name="Evangelista C.C."/>
            <person name="Ferraz C."/>
            <person name="Ferriera S."/>
            <person name="Fleischmann W."/>
            <person name="Fosler C."/>
            <person name="Gabrielian A.E."/>
            <person name="Garg N.S."/>
            <person name="Gelbart W.M."/>
            <person name="Glasser K."/>
            <person name="Glodek A."/>
            <person name="Gong F."/>
            <person name="Gorrell J.H."/>
            <person name="Gu Z."/>
            <person name="Guan P."/>
            <person name="Harris M."/>
            <person name="Harris N.L."/>
            <person name="Harvey D.A."/>
            <person name="Heiman T.J."/>
            <person name="Hernandez J.R."/>
            <person name="Houck J."/>
            <person name="Hostin D."/>
            <person name="Houston K.A."/>
            <person name="Howland T.J."/>
            <person name="Wei M.-H."/>
            <person name="Ibegwam C."/>
            <person name="Jalali M."/>
            <person name="Kalush F."/>
            <person name="Karpen G.H."/>
            <person name="Ke Z."/>
            <person name="Kennison J.A."/>
            <person name="Ketchum K.A."/>
            <person name="Kimmel B.E."/>
            <person name="Kodira C.D."/>
            <person name="Kraft C.L."/>
            <person name="Kravitz S."/>
            <person name="Kulp D."/>
            <person name="Lai Z."/>
            <person name="Lasko P."/>
            <person name="Lei Y."/>
            <person name="Levitsky A.A."/>
            <person name="Li J.H."/>
            <person name="Li Z."/>
            <person name="Liang Y."/>
            <person name="Lin X."/>
            <person name="Liu X."/>
            <person name="Mattei B."/>
            <person name="McIntosh T.C."/>
            <person name="McLeod M.P."/>
            <person name="McPherson D."/>
            <person name="Merkulov G."/>
            <person name="Milshina N.V."/>
            <person name="Mobarry C."/>
            <person name="Morris J."/>
            <person name="Moshrefi A."/>
            <person name="Mount S.M."/>
            <person name="Moy M."/>
            <person name="Murphy B."/>
            <person name="Murphy L."/>
            <person name="Muzny D.M."/>
            <person name="Nelson D.L."/>
            <person name="Nelson D.R."/>
            <person name="Nelson K.A."/>
            <person name="Nixon K."/>
            <person name="Nusskern D.R."/>
            <person name="Pacleb J.M."/>
            <person name="Palazzolo M."/>
            <person name="Pittman G.S."/>
            <person name="Pan S."/>
            <person name="Pollard J."/>
            <person name="Puri V."/>
            <person name="Reese M.G."/>
            <person name="Reinert K."/>
            <person name="Remington K."/>
            <person name="Saunders R.D.C."/>
            <person name="Scheeler F."/>
            <person name="Shen H."/>
            <person name="Shue B.C."/>
            <person name="Siden-Kiamos I."/>
            <person name="Simpson M."/>
            <person name="Skupski M.P."/>
            <person name="Smith T.J."/>
            <person name="Spier E."/>
            <person name="Spradling A.C."/>
            <person name="Stapleton M."/>
            <person name="Strong R."/>
            <person name="Sun E."/>
            <person name="Svirskas R."/>
            <person name="Tector C."/>
            <person name="Turner R."/>
            <person name="Venter E."/>
            <person name="Wang A.H."/>
            <person name="Wang X."/>
            <person name="Wang Z.-Y."/>
            <person name="Wassarman D.A."/>
            <person name="Weinstock G.M."/>
            <person name="Weissenbach J."/>
            <person name="Williams S.M."/>
            <person name="Woodage T."/>
            <person name="Worley K.C."/>
            <person name="Wu D."/>
            <person name="Yang S."/>
            <person name="Yao Q.A."/>
            <person name="Ye J."/>
            <person name="Yeh R.-F."/>
            <person name="Zaveri J.S."/>
            <person name="Zhan M."/>
            <person name="Zhang G."/>
            <person name="Zhao Q."/>
            <person name="Zheng L."/>
            <person name="Zheng X.H."/>
            <person name="Zhong F.N."/>
            <person name="Zhong W."/>
            <person name="Zhou X."/>
            <person name="Zhu S.C."/>
            <person name="Zhu X."/>
            <person name="Smith H.O."/>
            <person name="Gibbs R.A."/>
            <person name="Myers E.W."/>
            <person name="Rubin G.M."/>
            <person name="Venter J.C."/>
        </authorList>
    </citation>
    <scope>NUCLEOTIDE SEQUENCE [LARGE SCALE GENOMIC DNA]</scope>
    <source>
        <strain>Berkeley</strain>
    </source>
</reference>
<reference key="4">
    <citation type="journal article" date="2002" name="Genome Biol.">
        <title>Annotation of the Drosophila melanogaster euchromatic genome: a systematic review.</title>
        <authorList>
            <person name="Misra S."/>
            <person name="Crosby M.A."/>
            <person name="Mungall C.J."/>
            <person name="Matthews B.B."/>
            <person name="Campbell K.S."/>
            <person name="Hradecky P."/>
            <person name="Huang Y."/>
            <person name="Kaminker J.S."/>
            <person name="Millburn G.H."/>
            <person name="Prochnik S.E."/>
            <person name="Smith C.D."/>
            <person name="Tupy J.L."/>
            <person name="Whitfield E.J."/>
            <person name="Bayraktaroglu L."/>
            <person name="Berman B.P."/>
            <person name="Bettencourt B.R."/>
            <person name="Celniker S.E."/>
            <person name="de Grey A.D.N.J."/>
            <person name="Drysdale R.A."/>
            <person name="Harris N.L."/>
            <person name="Richter J."/>
            <person name="Russo S."/>
            <person name="Schroeder A.J."/>
            <person name="Shu S.Q."/>
            <person name="Stapleton M."/>
            <person name="Yamada C."/>
            <person name="Ashburner M."/>
            <person name="Gelbart W.M."/>
            <person name="Rubin G.M."/>
            <person name="Lewis S.E."/>
        </authorList>
    </citation>
    <scope>GENOME REANNOTATION</scope>
    <source>
        <strain>Berkeley</strain>
    </source>
</reference>
<reference key="5">
    <citation type="journal article" date="2002" name="Genome Biol.">
        <title>A Drosophila full-length cDNA resource.</title>
        <authorList>
            <person name="Stapleton M."/>
            <person name="Carlson J.W."/>
            <person name="Brokstein P."/>
            <person name="Yu C."/>
            <person name="Champe M."/>
            <person name="George R.A."/>
            <person name="Guarin H."/>
            <person name="Kronmiller B."/>
            <person name="Pacleb J.M."/>
            <person name="Park S."/>
            <person name="Wan K.H."/>
            <person name="Rubin G.M."/>
            <person name="Celniker S.E."/>
        </authorList>
    </citation>
    <scope>NUCLEOTIDE SEQUENCE [LARGE SCALE MRNA]</scope>
    <source>
        <strain>Berkeley</strain>
        <tissue>Embryo</tissue>
    </source>
</reference>
<reference key="6">
    <citation type="journal article" date="1995" name="J. Cell Sci.">
        <title>Expression of Drosophila lamin C is developmentally regulated: analogies with vertebrate A-type lamins.</title>
        <authorList>
            <person name="Riemer D."/>
            <person name="Stuurman N."/>
            <person name="Berrios M."/>
            <person name="Hunter C."/>
            <person name="Fisher P.A."/>
            <person name="Weber K."/>
        </authorList>
    </citation>
    <scope>SUBCELLULAR LOCATION</scope>
    <scope>TISSUE SPECIFICITY</scope>
    <scope>DEVELOPMENTAL STAGE</scope>
</reference>
<reference key="7">
    <citation type="journal article" date="2006" name="Eur. J. Cell Biol.">
        <title>The Drosophila melanogaster LEM-domain protein MAN1.</title>
        <authorList>
            <person name="Wagner N."/>
            <person name="Kagermeier B."/>
            <person name="Loserth S."/>
            <person name="Krohne G."/>
        </authorList>
    </citation>
    <scope>INTERACTION WITH MAN1</scope>
</reference>
<reference key="8">
    <citation type="journal article" date="2008" name="Genetics">
        <title>Tissue-specific defects are caused by loss of the Drosophila MAN1 LEM domain protein.</title>
        <authorList>
            <person name="Pinto B.S."/>
            <person name="Wilmington S.R."/>
            <person name="Hornick E.E."/>
            <person name="Wallrath L.L."/>
            <person name="Geyer P.K."/>
        </authorList>
    </citation>
    <scope>SUBCELLULAR LOCATION</scope>
</reference>
<reference key="9">
    <citation type="journal article" date="2008" name="J. Proteome Res.">
        <title>Phosphoproteome analysis of Drosophila melanogaster embryos.</title>
        <authorList>
            <person name="Zhai B."/>
            <person name="Villen J."/>
            <person name="Beausoleil S.A."/>
            <person name="Mintseris J."/>
            <person name="Gygi S.P."/>
        </authorList>
    </citation>
    <scope>PHOSPHORYLATION [LARGE SCALE ANALYSIS] AT SER-34; SER-406; SER-441 AND THR-443</scope>
    <scope>IDENTIFICATION BY MASS SPECTROMETRY</scope>
    <source>
        <tissue>Embryo</tissue>
    </source>
</reference>
<reference key="10">
    <citation type="journal article" date="2016" name="Biol. Open">
        <title>B-type nuclear lamin and the nuclear pore complex Nup107-160 influences maintenance of the spindle envelope required for cytokinesis in Drosophila male meiosis.</title>
        <authorList>
            <person name="Hayashi D."/>
            <person name="Tanabe K."/>
            <person name="Katsube H."/>
            <person name="Inoue Y.H."/>
        </authorList>
    </citation>
    <scope>FUNCTION</scope>
    <scope>SUBCELLULAR LOCATION</scope>
    <scope>TISSUE SPECIFICITY</scope>
</reference>
<name>LAMC_DROME</name>
<evidence type="ECO:0000250" key="1">
    <source>
        <dbReference type="UniProtKB" id="P08928"/>
    </source>
</evidence>
<evidence type="ECO:0000255" key="2"/>
<evidence type="ECO:0000255" key="3">
    <source>
        <dbReference type="PROSITE-ProRule" id="PRU01187"/>
    </source>
</evidence>
<evidence type="ECO:0000255" key="4">
    <source>
        <dbReference type="PROSITE-ProRule" id="PRU01188"/>
    </source>
</evidence>
<evidence type="ECO:0000256" key="5">
    <source>
        <dbReference type="SAM" id="MobiDB-lite"/>
    </source>
</evidence>
<evidence type="ECO:0000269" key="6">
    <source>
    </source>
</evidence>
<evidence type="ECO:0000269" key="7">
    <source>
    </source>
</evidence>
<evidence type="ECO:0000269" key="8">
    <source>
    </source>
</evidence>
<evidence type="ECO:0000269" key="9">
    <source>
    </source>
</evidence>
<evidence type="ECO:0000269" key="10">
    <source>
    </source>
</evidence>
<evidence type="ECO:0000305" key="11"/>
<accession>Q03427</accession>
<accession>Q24374</accession>
<accession>Q9V729</accession>
<proteinExistence type="evidence at protein level"/>